<accession>B8D982</accession>
<gene>
    <name evidence="1" type="primary">bioD</name>
    <name type="ordered locus">BUAP5A_285</name>
</gene>
<dbReference type="EC" id="6.3.3.3" evidence="1"/>
<dbReference type="EMBL" id="CP001161">
    <property type="protein sequence ID" value="ACL30653.1"/>
    <property type="molecule type" value="Genomic_DNA"/>
</dbReference>
<dbReference type="RefSeq" id="WP_009874244.1">
    <property type="nucleotide sequence ID" value="NC_011833.1"/>
</dbReference>
<dbReference type="SMR" id="B8D982"/>
<dbReference type="KEGG" id="bap:BUAP5A_285"/>
<dbReference type="HOGENOM" id="CLU_072551_0_0_6"/>
<dbReference type="OrthoDB" id="9802097at2"/>
<dbReference type="UniPathway" id="UPA00078">
    <property type="reaction ID" value="UER00161"/>
</dbReference>
<dbReference type="Proteomes" id="UP000006904">
    <property type="component" value="Chromosome"/>
</dbReference>
<dbReference type="GO" id="GO:0005829">
    <property type="term" value="C:cytosol"/>
    <property type="evidence" value="ECO:0007669"/>
    <property type="project" value="TreeGrafter"/>
</dbReference>
<dbReference type="GO" id="GO:0005524">
    <property type="term" value="F:ATP binding"/>
    <property type="evidence" value="ECO:0007669"/>
    <property type="project" value="UniProtKB-UniRule"/>
</dbReference>
<dbReference type="GO" id="GO:0004141">
    <property type="term" value="F:dethiobiotin synthase activity"/>
    <property type="evidence" value="ECO:0007669"/>
    <property type="project" value="UniProtKB-UniRule"/>
</dbReference>
<dbReference type="GO" id="GO:0000287">
    <property type="term" value="F:magnesium ion binding"/>
    <property type="evidence" value="ECO:0007669"/>
    <property type="project" value="UniProtKB-UniRule"/>
</dbReference>
<dbReference type="GO" id="GO:0009102">
    <property type="term" value="P:biotin biosynthetic process"/>
    <property type="evidence" value="ECO:0007669"/>
    <property type="project" value="UniProtKB-UniRule"/>
</dbReference>
<dbReference type="CDD" id="cd03109">
    <property type="entry name" value="DTBS"/>
    <property type="match status" value="1"/>
</dbReference>
<dbReference type="FunFam" id="3.40.50.300:FF:000292">
    <property type="entry name" value="ATP-dependent dethiobiotin synthetase BioD"/>
    <property type="match status" value="1"/>
</dbReference>
<dbReference type="Gene3D" id="3.40.50.300">
    <property type="entry name" value="P-loop containing nucleotide triphosphate hydrolases"/>
    <property type="match status" value="1"/>
</dbReference>
<dbReference type="HAMAP" id="MF_00336">
    <property type="entry name" value="BioD"/>
    <property type="match status" value="1"/>
</dbReference>
<dbReference type="InterPro" id="IPR004472">
    <property type="entry name" value="DTB_synth_BioD"/>
</dbReference>
<dbReference type="InterPro" id="IPR027417">
    <property type="entry name" value="P-loop_NTPase"/>
</dbReference>
<dbReference type="NCBIfam" id="TIGR00347">
    <property type="entry name" value="bioD"/>
    <property type="match status" value="1"/>
</dbReference>
<dbReference type="PANTHER" id="PTHR43210">
    <property type="entry name" value="DETHIOBIOTIN SYNTHETASE"/>
    <property type="match status" value="1"/>
</dbReference>
<dbReference type="PANTHER" id="PTHR43210:SF5">
    <property type="entry name" value="DETHIOBIOTIN SYNTHETASE"/>
    <property type="match status" value="1"/>
</dbReference>
<dbReference type="Pfam" id="PF13500">
    <property type="entry name" value="AAA_26"/>
    <property type="match status" value="1"/>
</dbReference>
<dbReference type="PIRSF" id="PIRSF006755">
    <property type="entry name" value="DTB_synth"/>
    <property type="match status" value="1"/>
</dbReference>
<dbReference type="SUPFAM" id="SSF52540">
    <property type="entry name" value="P-loop containing nucleoside triphosphate hydrolases"/>
    <property type="match status" value="1"/>
</dbReference>
<sequence length="224" mass="25138">MIKKFFITGTDTNVGKTIVSSILLKKATMSGYQTAGYKPVSSGGQKKSSGFFNQDAILLKKSSSIILSDREVNPIAFFENAPPHILSKFQKRSIKKEELSLGLSNITKKSNWILVEGAGGWYTPLSCKDTFSSWVKQEKLTVIIIIAIKLGCINHAILTEKAIISDQIKCGGWIANNIFPKDKYNMHYIQTLLNYIKSPFLGVVPYFKNKNRINFKKIKIKLPK</sequence>
<reference key="1">
    <citation type="journal article" date="2009" name="Science">
        <title>The dynamics and time scale of ongoing genomic erosion in symbiotic bacteria.</title>
        <authorList>
            <person name="Moran N.A."/>
            <person name="McLaughlin H.J."/>
            <person name="Sorek R."/>
        </authorList>
    </citation>
    <scope>NUCLEOTIDE SEQUENCE [LARGE SCALE GENOMIC DNA]</scope>
    <source>
        <strain>5A</strain>
    </source>
</reference>
<proteinExistence type="inferred from homology"/>
<organism>
    <name type="scientific">Buchnera aphidicola subsp. Acyrthosiphon pisum (strain 5A)</name>
    <dbReference type="NCBI Taxonomy" id="563178"/>
    <lineage>
        <taxon>Bacteria</taxon>
        <taxon>Pseudomonadati</taxon>
        <taxon>Pseudomonadota</taxon>
        <taxon>Gammaproteobacteria</taxon>
        <taxon>Enterobacterales</taxon>
        <taxon>Erwiniaceae</taxon>
        <taxon>Buchnera</taxon>
    </lineage>
</organism>
<protein>
    <recommendedName>
        <fullName evidence="1">ATP-dependent dethiobiotin synthetase BioD</fullName>
        <ecNumber evidence="1">6.3.3.3</ecNumber>
    </recommendedName>
    <alternativeName>
        <fullName evidence="1">DTB synthetase</fullName>
        <shortName evidence="1">DTBS</shortName>
    </alternativeName>
    <alternativeName>
        <fullName evidence="1">Dethiobiotin synthase</fullName>
    </alternativeName>
</protein>
<evidence type="ECO:0000255" key="1">
    <source>
        <dbReference type="HAMAP-Rule" id="MF_00336"/>
    </source>
</evidence>
<keyword id="KW-0067">ATP-binding</keyword>
<keyword id="KW-0093">Biotin biosynthesis</keyword>
<keyword id="KW-0963">Cytoplasm</keyword>
<keyword id="KW-0436">Ligase</keyword>
<keyword id="KW-0460">Magnesium</keyword>
<keyword id="KW-0479">Metal-binding</keyword>
<keyword id="KW-0547">Nucleotide-binding</keyword>
<name>BIOD_BUCA5</name>
<feature type="chain" id="PRO_1000133205" description="ATP-dependent dethiobiotin synthetase BioD">
    <location>
        <begin position="1"/>
        <end position="224"/>
    </location>
</feature>
<feature type="active site" evidence="1">
    <location>
        <position position="38"/>
    </location>
</feature>
<feature type="binding site" evidence="1">
    <location>
        <begin position="13"/>
        <end position="18"/>
    </location>
    <ligand>
        <name>ATP</name>
        <dbReference type="ChEBI" id="CHEBI:30616"/>
    </ligand>
</feature>
<feature type="binding site" evidence="1">
    <location>
        <position position="17"/>
    </location>
    <ligand>
        <name>Mg(2+)</name>
        <dbReference type="ChEBI" id="CHEBI:18420"/>
    </ligand>
</feature>
<feature type="binding site" evidence="1">
    <location>
        <position position="42"/>
    </location>
    <ligand>
        <name>substrate</name>
    </ligand>
</feature>
<feature type="binding site" evidence="1">
    <location>
        <position position="55"/>
    </location>
    <ligand>
        <name>ATP</name>
        <dbReference type="ChEBI" id="CHEBI:30616"/>
    </ligand>
</feature>
<feature type="binding site" evidence="1">
    <location>
        <position position="55"/>
    </location>
    <ligand>
        <name>Mg(2+)</name>
        <dbReference type="ChEBI" id="CHEBI:18420"/>
    </ligand>
</feature>
<feature type="binding site" evidence="1">
    <location>
        <begin position="116"/>
        <end position="119"/>
    </location>
    <ligand>
        <name>ATP</name>
        <dbReference type="ChEBI" id="CHEBI:30616"/>
    </ligand>
</feature>
<feature type="binding site" evidence="1">
    <location>
        <position position="116"/>
    </location>
    <ligand>
        <name>Mg(2+)</name>
        <dbReference type="ChEBI" id="CHEBI:18420"/>
    </ligand>
</feature>
<feature type="binding site" evidence="1">
    <location>
        <begin position="176"/>
        <end position="177"/>
    </location>
    <ligand>
        <name>ATP</name>
        <dbReference type="ChEBI" id="CHEBI:30616"/>
    </ligand>
</feature>
<feature type="binding site" evidence="1">
    <location>
        <position position="211"/>
    </location>
    <ligand>
        <name>ATP</name>
        <dbReference type="ChEBI" id="CHEBI:30616"/>
    </ligand>
</feature>
<comment type="function">
    <text evidence="1">Catalyzes a mechanistically unusual reaction, the ATP-dependent insertion of CO2 between the N7 and N8 nitrogen atoms of 7,8-diaminopelargonic acid (DAPA, also called 7,8-diammoniononanoate) to form a ureido ring.</text>
</comment>
<comment type="catalytic activity">
    <reaction evidence="1">
        <text>(7R,8S)-7,8-diammoniononanoate + CO2 + ATP = (4R,5S)-dethiobiotin + ADP + phosphate + 3 H(+)</text>
        <dbReference type="Rhea" id="RHEA:15805"/>
        <dbReference type="ChEBI" id="CHEBI:15378"/>
        <dbReference type="ChEBI" id="CHEBI:16526"/>
        <dbReference type="ChEBI" id="CHEBI:30616"/>
        <dbReference type="ChEBI" id="CHEBI:43474"/>
        <dbReference type="ChEBI" id="CHEBI:149469"/>
        <dbReference type="ChEBI" id="CHEBI:149473"/>
        <dbReference type="ChEBI" id="CHEBI:456216"/>
        <dbReference type="EC" id="6.3.3.3"/>
    </reaction>
</comment>
<comment type="cofactor">
    <cofactor evidence="1">
        <name>Mg(2+)</name>
        <dbReference type="ChEBI" id="CHEBI:18420"/>
    </cofactor>
</comment>
<comment type="pathway">
    <text evidence="1">Cofactor biosynthesis; biotin biosynthesis; biotin from 7,8-diaminononanoate: step 1/2.</text>
</comment>
<comment type="subunit">
    <text evidence="1">Homodimer.</text>
</comment>
<comment type="subcellular location">
    <subcellularLocation>
        <location evidence="1">Cytoplasm</location>
    </subcellularLocation>
</comment>
<comment type="similarity">
    <text evidence="1">Belongs to the dethiobiotin synthetase family.</text>
</comment>